<sequence length="379" mass="40670">MNNTEFYDRLGVSKDASQDEIKKAYRRMSKKYHPDINKETGAEEKYKEVQEAYETLSDTQKRAAYDQYGAAGANGGFGGFDGGGFGGFDGGGFGGFEDIFSSFFGGGGMRNPNAPRQGDDLQYRVNLSFEEAIFGAEKEVSYNRESSCHTCSGSGAKPGTSPVTCQKCHGSGVINVDTQTPLGTMRRQVTCDVCQGSGQEIKEKCPTCHGTGHEKKTHKVSVKIPAGVETGQQIRLTGQGEAGFNGGPYGDLFVIINVLPSQQFERNGSTIYYTLNISFVQAALGDTIDIPTVHGAVEMSIPAGTQTGKTFRLRGKGAPKLRGGGQGDQHVTVNIVTPTKLNDAQKEALHAFAEASGDKMVHPKKKGFFDKVKDALDVD</sequence>
<feature type="chain" id="PRO_0000070892" description="Chaperone protein DnaJ">
    <location>
        <begin position="1"/>
        <end position="379"/>
    </location>
</feature>
<feature type="domain" description="J" evidence="1">
    <location>
        <begin position="5"/>
        <end position="69"/>
    </location>
</feature>
<feature type="repeat" description="CXXCXGXG motif">
    <location>
        <begin position="148"/>
        <end position="155"/>
    </location>
</feature>
<feature type="repeat" description="CXXCXGXG motif">
    <location>
        <begin position="165"/>
        <end position="172"/>
    </location>
</feature>
<feature type="repeat" description="CXXCXGXG motif">
    <location>
        <begin position="191"/>
        <end position="198"/>
    </location>
</feature>
<feature type="repeat" description="CXXCXGXG motif">
    <location>
        <begin position="205"/>
        <end position="212"/>
    </location>
</feature>
<feature type="zinc finger region" description="CR-type" evidence="1">
    <location>
        <begin position="135"/>
        <end position="217"/>
    </location>
</feature>
<feature type="binding site" evidence="1">
    <location>
        <position position="148"/>
    </location>
    <ligand>
        <name>Zn(2+)</name>
        <dbReference type="ChEBI" id="CHEBI:29105"/>
        <label>1</label>
    </ligand>
</feature>
<feature type="binding site" evidence="1">
    <location>
        <position position="151"/>
    </location>
    <ligand>
        <name>Zn(2+)</name>
        <dbReference type="ChEBI" id="CHEBI:29105"/>
        <label>1</label>
    </ligand>
</feature>
<feature type="binding site" evidence="1">
    <location>
        <position position="165"/>
    </location>
    <ligand>
        <name>Zn(2+)</name>
        <dbReference type="ChEBI" id="CHEBI:29105"/>
        <label>2</label>
    </ligand>
</feature>
<feature type="binding site" evidence="1">
    <location>
        <position position="168"/>
    </location>
    <ligand>
        <name>Zn(2+)</name>
        <dbReference type="ChEBI" id="CHEBI:29105"/>
        <label>2</label>
    </ligand>
</feature>
<feature type="binding site" evidence="1">
    <location>
        <position position="191"/>
    </location>
    <ligand>
        <name>Zn(2+)</name>
        <dbReference type="ChEBI" id="CHEBI:29105"/>
        <label>2</label>
    </ligand>
</feature>
<feature type="binding site" evidence="1">
    <location>
        <position position="194"/>
    </location>
    <ligand>
        <name>Zn(2+)</name>
        <dbReference type="ChEBI" id="CHEBI:29105"/>
        <label>2</label>
    </ligand>
</feature>
<feature type="binding site" evidence="1">
    <location>
        <position position="205"/>
    </location>
    <ligand>
        <name>Zn(2+)</name>
        <dbReference type="ChEBI" id="CHEBI:29105"/>
        <label>1</label>
    </ligand>
</feature>
<feature type="binding site" evidence="1">
    <location>
        <position position="208"/>
    </location>
    <ligand>
        <name>Zn(2+)</name>
        <dbReference type="ChEBI" id="CHEBI:29105"/>
        <label>1</label>
    </ligand>
</feature>
<dbReference type="EMBL" id="AE009948">
    <property type="protein sequence ID" value="AAM99006.1"/>
    <property type="molecule type" value="Genomic_DNA"/>
</dbReference>
<dbReference type="RefSeq" id="NP_687134.1">
    <property type="nucleotide sequence ID" value="NC_004116.1"/>
</dbReference>
<dbReference type="RefSeq" id="WP_001066287.1">
    <property type="nucleotide sequence ID" value="NC_004116.1"/>
</dbReference>
<dbReference type="SMR" id="Q8E298"/>
<dbReference type="STRING" id="208435.SAG0098"/>
<dbReference type="KEGG" id="sag:SAG0098"/>
<dbReference type="PATRIC" id="fig|208435.3.peg.97"/>
<dbReference type="HOGENOM" id="CLU_017633_0_0_9"/>
<dbReference type="OrthoDB" id="9779889at2"/>
<dbReference type="Proteomes" id="UP000000821">
    <property type="component" value="Chromosome"/>
</dbReference>
<dbReference type="GO" id="GO:0005737">
    <property type="term" value="C:cytoplasm"/>
    <property type="evidence" value="ECO:0007669"/>
    <property type="project" value="UniProtKB-SubCell"/>
</dbReference>
<dbReference type="GO" id="GO:0005524">
    <property type="term" value="F:ATP binding"/>
    <property type="evidence" value="ECO:0007669"/>
    <property type="project" value="InterPro"/>
</dbReference>
<dbReference type="GO" id="GO:0031072">
    <property type="term" value="F:heat shock protein binding"/>
    <property type="evidence" value="ECO:0007669"/>
    <property type="project" value="InterPro"/>
</dbReference>
<dbReference type="GO" id="GO:0051082">
    <property type="term" value="F:unfolded protein binding"/>
    <property type="evidence" value="ECO:0007669"/>
    <property type="project" value="UniProtKB-UniRule"/>
</dbReference>
<dbReference type="GO" id="GO:0008270">
    <property type="term" value="F:zinc ion binding"/>
    <property type="evidence" value="ECO:0007669"/>
    <property type="project" value="UniProtKB-UniRule"/>
</dbReference>
<dbReference type="GO" id="GO:0051085">
    <property type="term" value="P:chaperone cofactor-dependent protein refolding"/>
    <property type="evidence" value="ECO:0007669"/>
    <property type="project" value="TreeGrafter"/>
</dbReference>
<dbReference type="GO" id="GO:0006260">
    <property type="term" value="P:DNA replication"/>
    <property type="evidence" value="ECO:0007669"/>
    <property type="project" value="UniProtKB-KW"/>
</dbReference>
<dbReference type="GO" id="GO:0042026">
    <property type="term" value="P:protein refolding"/>
    <property type="evidence" value="ECO:0007669"/>
    <property type="project" value="TreeGrafter"/>
</dbReference>
<dbReference type="GO" id="GO:0009408">
    <property type="term" value="P:response to heat"/>
    <property type="evidence" value="ECO:0007669"/>
    <property type="project" value="InterPro"/>
</dbReference>
<dbReference type="CDD" id="cd06257">
    <property type="entry name" value="DnaJ"/>
    <property type="match status" value="1"/>
</dbReference>
<dbReference type="CDD" id="cd10747">
    <property type="entry name" value="DnaJ_C"/>
    <property type="match status" value="1"/>
</dbReference>
<dbReference type="CDD" id="cd10719">
    <property type="entry name" value="DnaJ_zf"/>
    <property type="match status" value="1"/>
</dbReference>
<dbReference type="FunFam" id="1.10.287.110:FF:000031">
    <property type="entry name" value="Molecular chaperone DnaJ"/>
    <property type="match status" value="1"/>
</dbReference>
<dbReference type="FunFam" id="2.10.230.10:FF:000002">
    <property type="entry name" value="Molecular chaperone DnaJ"/>
    <property type="match status" value="1"/>
</dbReference>
<dbReference type="FunFam" id="2.60.260.20:FF:000004">
    <property type="entry name" value="Molecular chaperone DnaJ"/>
    <property type="match status" value="1"/>
</dbReference>
<dbReference type="Gene3D" id="1.10.287.110">
    <property type="entry name" value="DnaJ domain"/>
    <property type="match status" value="1"/>
</dbReference>
<dbReference type="Gene3D" id="2.10.230.10">
    <property type="entry name" value="Heat shock protein DnaJ, cysteine-rich domain"/>
    <property type="match status" value="1"/>
</dbReference>
<dbReference type="Gene3D" id="2.60.260.20">
    <property type="entry name" value="Urease metallochaperone UreE, N-terminal domain"/>
    <property type="match status" value="2"/>
</dbReference>
<dbReference type="HAMAP" id="MF_01152">
    <property type="entry name" value="DnaJ"/>
    <property type="match status" value="1"/>
</dbReference>
<dbReference type="InterPro" id="IPR012724">
    <property type="entry name" value="DnaJ"/>
</dbReference>
<dbReference type="InterPro" id="IPR002939">
    <property type="entry name" value="DnaJ_C"/>
</dbReference>
<dbReference type="InterPro" id="IPR001623">
    <property type="entry name" value="DnaJ_domain"/>
</dbReference>
<dbReference type="InterPro" id="IPR018253">
    <property type="entry name" value="DnaJ_domain_CS"/>
</dbReference>
<dbReference type="InterPro" id="IPR008971">
    <property type="entry name" value="HSP40/DnaJ_pept-bd"/>
</dbReference>
<dbReference type="InterPro" id="IPR001305">
    <property type="entry name" value="HSP_DnaJ_Cys-rich_dom"/>
</dbReference>
<dbReference type="InterPro" id="IPR036410">
    <property type="entry name" value="HSP_DnaJ_Cys-rich_dom_sf"/>
</dbReference>
<dbReference type="InterPro" id="IPR036869">
    <property type="entry name" value="J_dom_sf"/>
</dbReference>
<dbReference type="NCBIfam" id="TIGR02349">
    <property type="entry name" value="DnaJ_bact"/>
    <property type="match status" value="1"/>
</dbReference>
<dbReference type="NCBIfam" id="NF008035">
    <property type="entry name" value="PRK10767.1"/>
    <property type="match status" value="1"/>
</dbReference>
<dbReference type="NCBIfam" id="NF010869">
    <property type="entry name" value="PRK14276.1"/>
    <property type="match status" value="1"/>
</dbReference>
<dbReference type="NCBIfam" id="NF010873">
    <property type="entry name" value="PRK14280.1"/>
    <property type="match status" value="1"/>
</dbReference>
<dbReference type="PANTHER" id="PTHR43096:SF48">
    <property type="entry name" value="CHAPERONE PROTEIN DNAJ"/>
    <property type="match status" value="1"/>
</dbReference>
<dbReference type="PANTHER" id="PTHR43096">
    <property type="entry name" value="DNAJ HOMOLOG 1, MITOCHONDRIAL-RELATED"/>
    <property type="match status" value="1"/>
</dbReference>
<dbReference type="Pfam" id="PF00226">
    <property type="entry name" value="DnaJ"/>
    <property type="match status" value="1"/>
</dbReference>
<dbReference type="Pfam" id="PF01556">
    <property type="entry name" value="DnaJ_C"/>
    <property type="match status" value="1"/>
</dbReference>
<dbReference type="Pfam" id="PF00684">
    <property type="entry name" value="DnaJ_CXXCXGXG"/>
    <property type="match status" value="1"/>
</dbReference>
<dbReference type="PRINTS" id="PR00625">
    <property type="entry name" value="JDOMAIN"/>
</dbReference>
<dbReference type="SMART" id="SM00271">
    <property type="entry name" value="DnaJ"/>
    <property type="match status" value="1"/>
</dbReference>
<dbReference type="SUPFAM" id="SSF46565">
    <property type="entry name" value="Chaperone J-domain"/>
    <property type="match status" value="1"/>
</dbReference>
<dbReference type="SUPFAM" id="SSF57938">
    <property type="entry name" value="DnaJ/Hsp40 cysteine-rich domain"/>
    <property type="match status" value="1"/>
</dbReference>
<dbReference type="SUPFAM" id="SSF49493">
    <property type="entry name" value="HSP40/DnaJ peptide-binding domain"/>
    <property type="match status" value="2"/>
</dbReference>
<dbReference type="PROSITE" id="PS00636">
    <property type="entry name" value="DNAJ_1"/>
    <property type="match status" value="1"/>
</dbReference>
<dbReference type="PROSITE" id="PS50076">
    <property type="entry name" value="DNAJ_2"/>
    <property type="match status" value="1"/>
</dbReference>
<dbReference type="PROSITE" id="PS51188">
    <property type="entry name" value="ZF_CR"/>
    <property type="match status" value="1"/>
</dbReference>
<name>DNAJ_STRA5</name>
<comment type="function">
    <text evidence="1">Participates actively in the response to hyperosmotic and heat shock by preventing the aggregation of stress-denatured proteins and by disaggregating proteins, also in an autonomous, DnaK-independent fashion. Unfolded proteins bind initially to DnaJ; upon interaction with the DnaJ-bound protein, DnaK hydrolyzes its bound ATP, resulting in the formation of a stable complex. GrpE releases ADP from DnaK; ATP binding to DnaK triggers the release of the substrate protein, thus completing the reaction cycle. Several rounds of ATP-dependent interactions between DnaJ, DnaK and GrpE are required for fully efficient folding. Also involved, together with DnaK and GrpE, in the DNA replication of plasmids through activation of initiation proteins.</text>
</comment>
<comment type="cofactor">
    <cofactor evidence="1">
        <name>Zn(2+)</name>
        <dbReference type="ChEBI" id="CHEBI:29105"/>
    </cofactor>
    <text evidence="1">Binds 2 Zn(2+) ions per monomer.</text>
</comment>
<comment type="subunit">
    <text evidence="1">Homodimer.</text>
</comment>
<comment type="subcellular location">
    <subcellularLocation>
        <location evidence="1">Cytoplasm</location>
    </subcellularLocation>
</comment>
<comment type="domain">
    <text evidence="1">The J domain is necessary and sufficient to stimulate DnaK ATPase activity. Zinc center 1 plays an important role in the autonomous, DnaK-independent chaperone activity of DnaJ. Zinc center 2 is essential for interaction with DnaK and for DnaJ activity.</text>
</comment>
<comment type="similarity">
    <text evidence="1">Belongs to the DnaJ family.</text>
</comment>
<protein>
    <recommendedName>
        <fullName evidence="1">Chaperone protein DnaJ</fullName>
    </recommendedName>
</protein>
<evidence type="ECO:0000255" key="1">
    <source>
        <dbReference type="HAMAP-Rule" id="MF_01152"/>
    </source>
</evidence>
<keyword id="KW-0143">Chaperone</keyword>
<keyword id="KW-0963">Cytoplasm</keyword>
<keyword id="KW-0235">DNA replication</keyword>
<keyword id="KW-0479">Metal-binding</keyword>
<keyword id="KW-1185">Reference proteome</keyword>
<keyword id="KW-0677">Repeat</keyword>
<keyword id="KW-0346">Stress response</keyword>
<keyword id="KW-0862">Zinc</keyword>
<keyword id="KW-0863">Zinc-finger</keyword>
<accession>Q8E298</accession>
<reference key="1">
    <citation type="journal article" date="2002" name="Proc. Natl. Acad. Sci. U.S.A.">
        <title>Complete genome sequence and comparative genomic analysis of an emerging human pathogen, serotype V Streptococcus agalactiae.</title>
        <authorList>
            <person name="Tettelin H."/>
            <person name="Masignani V."/>
            <person name="Cieslewicz M.J."/>
            <person name="Eisen J.A."/>
            <person name="Peterson S.N."/>
            <person name="Wessels M.R."/>
            <person name="Paulsen I.T."/>
            <person name="Nelson K.E."/>
            <person name="Margarit I."/>
            <person name="Read T.D."/>
            <person name="Madoff L.C."/>
            <person name="Wolf A.M."/>
            <person name="Beanan M.J."/>
            <person name="Brinkac L.M."/>
            <person name="Daugherty S.C."/>
            <person name="DeBoy R.T."/>
            <person name="Durkin A.S."/>
            <person name="Kolonay J.F."/>
            <person name="Madupu R."/>
            <person name="Lewis M.R."/>
            <person name="Radune D."/>
            <person name="Fedorova N.B."/>
            <person name="Scanlan D."/>
            <person name="Khouri H.M."/>
            <person name="Mulligan S."/>
            <person name="Carty H.A."/>
            <person name="Cline R.T."/>
            <person name="Van Aken S.E."/>
            <person name="Gill J."/>
            <person name="Scarselli M."/>
            <person name="Mora M."/>
            <person name="Iacobini E.T."/>
            <person name="Brettoni C."/>
            <person name="Galli G."/>
            <person name="Mariani M."/>
            <person name="Vegni F."/>
            <person name="Maione D."/>
            <person name="Rinaudo D."/>
            <person name="Rappuoli R."/>
            <person name="Telford J.L."/>
            <person name="Kasper D.L."/>
            <person name="Grandi G."/>
            <person name="Fraser C.M."/>
        </authorList>
    </citation>
    <scope>NUCLEOTIDE SEQUENCE [LARGE SCALE GENOMIC DNA]</scope>
    <source>
        <strain>ATCC BAA-611 / 2603 V/R</strain>
    </source>
</reference>
<gene>
    <name evidence="1" type="primary">dnaJ</name>
    <name type="ordered locus">SAG0098</name>
</gene>
<organism>
    <name type="scientific">Streptococcus agalactiae serotype V (strain ATCC BAA-611 / 2603 V/R)</name>
    <dbReference type="NCBI Taxonomy" id="208435"/>
    <lineage>
        <taxon>Bacteria</taxon>
        <taxon>Bacillati</taxon>
        <taxon>Bacillota</taxon>
        <taxon>Bacilli</taxon>
        <taxon>Lactobacillales</taxon>
        <taxon>Streptococcaceae</taxon>
        <taxon>Streptococcus</taxon>
    </lineage>
</organism>
<proteinExistence type="inferred from homology"/>